<sequence length="214" mass="23548">MRIILLGAPGAGKGTQAQFIMEKYGIPQISTGDMLRAAVKSGSELGKQAKDIMDAGKLVTDELVIALVKERIAQEDCRNGFLLDGFPRTIPQADAMKEAGITVDYVLEFDVPDELIVDRIVGRRVHAASGRVYHIKFNPPKVEGKDDVTGEELTTRKDDQEETVRKRLVEYHQMTAPLIGYYTKEAQAGNTKYAKVDGTKAVADVRAELEKILG</sequence>
<evidence type="ECO:0000255" key="1">
    <source>
        <dbReference type="HAMAP-Rule" id="MF_00235"/>
    </source>
</evidence>
<reference key="1">
    <citation type="journal article" date="2008" name="PLoS Genet.">
        <title>Complete genome sequence of the N2-fixing broad host range endophyte Klebsiella pneumoniae 342 and virulence predictions verified in mice.</title>
        <authorList>
            <person name="Fouts D.E."/>
            <person name="Tyler H.L."/>
            <person name="DeBoy R.T."/>
            <person name="Daugherty S."/>
            <person name="Ren Q."/>
            <person name="Badger J.H."/>
            <person name="Durkin A.S."/>
            <person name="Huot H."/>
            <person name="Shrivastava S."/>
            <person name="Kothari S."/>
            <person name="Dodson R.J."/>
            <person name="Mohamoud Y."/>
            <person name="Khouri H."/>
            <person name="Roesch L.F.W."/>
            <person name="Krogfelt K.A."/>
            <person name="Struve C."/>
            <person name="Triplett E.W."/>
            <person name="Methe B.A."/>
        </authorList>
    </citation>
    <scope>NUCLEOTIDE SEQUENCE [LARGE SCALE GENOMIC DNA]</scope>
    <source>
        <strain>342</strain>
    </source>
</reference>
<name>KAD_KLEP3</name>
<keyword id="KW-0067">ATP-binding</keyword>
<keyword id="KW-0963">Cytoplasm</keyword>
<keyword id="KW-0418">Kinase</keyword>
<keyword id="KW-0545">Nucleotide biosynthesis</keyword>
<keyword id="KW-0547">Nucleotide-binding</keyword>
<keyword id="KW-0808">Transferase</keyword>
<organism>
    <name type="scientific">Klebsiella pneumoniae (strain 342)</name>
    <dbReference type="NCBI Taxonomy" id="507522"/>
    <lineage>
        <taxon>Bacteria</taxon>
        <taxon>Pseudomonadati</taxon>
        <taxon>Pseudomonadota</taxon>
        <taxon>Gammaproteobacteria</taxon>
        <taxon>Enterobacterales</taxon>
        <taxon>Enterobacteriaceae</taxon>
        <taxon>Klebsiella/Raoultella group</taxon>
        <taxon>Klebsiella</taxon>
        <taxon>Klebsiella pneumoniae complex</taxon>
    </lineage>
</organism>
<dbReference type="EC" id="2.7.4.3" evidence="1"/>
<dbReference type="EMBL" id="CP000964">
    <property type="protein sequence ID" value="ACI10278.1"/>
    <property type="molecule type" value="Genomic_DNA"/>
</dbReference>
<dbReference type="SMR" id="B5Y0N3"/>
<dbReference type="KEGG" id="kpe:KPK_4224"/>
<dbReference type="HOGENOM" id="CLU_032354_1_2_6"/>
<dbReference type="UniPathway" id="UPA00588">
    <property type="reaction ID" value="UER00649"/>
</dbReference>
<dbReference type="Proteomes" id="UP000001734">
    <property type="component" value="Chromosome"/>
</dbReference>
<dbReference type="GO" id="GO:0005737">
    <property type="term" value="C:cytoplasm"/>
    <property type="evidence" value="ECO:0007669"/>
    <property type="project" value="UniProtKB-SubCell"/>
</dbReference>
<dbReference type="GO" id="GO:0004017">
    <property type="term" value="F:adenylate kinase activity"/>
    <property type="evidence" value="ECO:0007669"/>
    <property type="project" value="UniProtKB-UniRule"/>
</dbReference>
<dbReference type="GO" id="GO:0005524">
    <property type="term" value="F:ATP binding"/>
    <property type="evidence" value="ECO:0007669"/>
    <property type="project" value="UniProtKB-UniRule"/>
</dbReference>
<dbReference type="GO" id="GO:0044209">
    <property type="term" value="P:AMP salvage"/>
    <property type="evidence" value="ECO:0007669"/>
    <property type="project" value="UniProtKB-UniRule"/>
</dbReference>
<dbReference type="CDD" id="cd01428">
    <property type="entry name" value="ADK"/>
    <property type="match status" value="1"/>
</dbReference>
<dbReference type="FunFam" id="3.40.50.300:FF:000106">
    <property type="entry name" value="Adenylate kinase mitochondrial"/>
    <property type="match status" value="1"/>
</dbReference>
<dbReference type="Gene3D" id="3.40.50.300">
    <property type="entry name" value="P-loop containing nucleotide triphosphate hydrolases"/>
    <property type="match status" value="1"/>
</dbReference>
<dbReference type="HAMAP" id="MF_00235">
    <property type="entry name" value="Adenylate_kinase_Adk"/>
    <property type="match status" value="1"/>
</dbReference>
<dbReference type="InterPro" id="IPR006259">
    <property type="entry name" value="Adenyl_kin_sub"/>
</dbReference>
<dbReference type="InterPro" id="IPR000850">
    <property type="entry name" value="Adenylat/UMP-CMP_kin"/>
</dbReference>
<dbReference type="InterPro" id="IPR033690">
    <property type="entry name" value="Adenylat_kinase_CS"/>
</dbReference>
<dbReference type="InterPro" id="IPR007862">
    <property type="entry name" value="Adenylate_kinase_lid-dom"/>
</dbReference>
<dbReference type="InterPro" id="IPR027417">
    <property type="entry name" value="P-loop_NTPase"/>
</dbReference>
<dbReference type="NCBIfam" id="TIGR01351">
    <property type="entry name" value="adk"/>
    <property type="match status" value="1"/>
</dbReference>
<dbReference type="NCBIfam" id="NF001379">
    <property type="entry name" value="PRK00279.1-1"/>
    <property type="match status" value="1"/>
</dbReference>
<dbReference type="NCBIfam" id="NF001380">
    <property type="entry name" value="PRK00279.1-2"/>
    <property type="match status" value="1"/>
</dbReference>
<dbReference type="NCBIfam" id="NF001381">
    <property type="entry name" value="PRK00279.1-3"/>
    <property type="match status" value="1"/>
</dbReference>
<dbReference type="NCBIfam" id="NF011100">
    <property type="entry name" value="PRK14527.1"/>
    <property type="match status" value="1"/>
</dbReference>
<dbReference type="PANTHER" id="PTHR23359">
    <property type="entry name" value="NUCLEOTIDE KINASE"/>
    <property type="match status" value="1"/>
</dbReference>
<dbReference type="Pfam" id="PF00406">
    <property type="entry name" value="ADK"/>
    <property type="match status" value="1"/>
</dbReference>
<dbReference type="Pfam" id="PF05191">
    <property type="entry name" value="ADK_lid"/>
    <property type="match status" value="1"/>
</dbReference>
<dbReference type="PRINTS" id="PR00094">
    <property type="entry name" value="ADENYLTKNASE"/>
</dbReference>
<dbReference type="SUPFAM" id="SSF52540">
    <property type="entry name" value="P-loop containing nucleoside triphosphate hydrolases"/>
    <property type="match status" value="1"/>
</dbReference>
<dbReference type="PROSITE" id="PS00113">
    <property type="entry name" value="ADENYLATE_KINASE"/>
    <property type="match status" value="1"/>
</dbReference>
<feature type="chain" id="PRO_1000100573" description="Adenylate kinase">
    <location>
        <begin position="1"/>
        <end position="214"/>
    </location>
</feature>
<feature type="region of interest" description="NMP" evidence="1">
    <location>
        <begin position="30"/>
        <end position="59"/>
    </location>
</feature>
<feature type="region of interest" description="LID">
    <location>
        <begin position="122"/>
        <end position="159"/>
    </location>
</feature>
<feature type="binding site" evidence="1">
    <location>
        <begin position="10"/>
        <end position="15"/>
    </location>
    <ligand>
        <name>ATP</name>
        <dbReference type="ChEBI" id="CHEBI:30616"/>
    </ligand>
</feature>
<feature type="binding site" evidence="1">
    <location>
        <position position="31"/>
    </location>
    <ligand>
        <name>AMP</name>
        <dbReference type="ChEBI" id="CHEBI:456215"/>
    </ligand>
</feature>
<feature type="binding site" evidence="1">
    <location>
        <position position="36"/>
    </location>
    <ligand>
        <name>AMP</name>
        <dbReference type="ChEBI" id="CHEBI:456215"/>
    </ligand>
</feature>
<feature type="binding site" evidence="1">
    <location>
        <begin position="57"/>
        <end position="59"/>
    </location>
    <ligand>
        <name>AMP</name>
        <dbReference type="ChEBI" id="CHEBI:456215"/>
    </ligand>
</feature>
<feature type="binding site" evidence="1">
    <location>
        <begin position="85"/>
        <end position="88"/>
    </location>
    <ligand>
        <name>AMP</name>
        <dbReference type="ChEBI" id="CHEBI:456215"/>
    </ligand>
</feature>
<feature type="binding site" evidence="1">
    <location>
        <position position="92"/>
    </location>
    <ligand>
        <name>AMP</name>
        <dbReference type="ChEBI" id="CHEBI:456215"/>
    </ligand>
</feature>
<feature type="binding site" evidence="1">
    <location>
        <position position="123"/>
    </location>
    <ligand>
        <name>ATP</name>
        <dbReference type="ChEBI" id="CHEBI:30616"/>
    </ligand>
</feature>
<feature type="binding site" evidence="1">
    <location>
        <begin position="132"/>
        <end position="133"/>
    </location>
    <ligand>
        <name>ATP</name>
        <dbReference type="ChEBI" id="CHEBI:30616"/>
    </ligand>
</feature>
<feature type="binding site" evidence="1">
    <location>
        <position position="156"/>
    </location>
    <ligand>
        <name>AMP</name>
        <dbReference type="ChEBI" id="CHEBI:456215"/>
    </ligand>
</feature>
<feature type="binding site" evidence="1">
    <location>
        <position position="167"/>
    </location>
    <ligand>
        <name>AMP</name>
        <dbReference type="ChEBI" id="CHEBI:456215"/>
    </ligand>
</feature>
<feature type="binding site" evidence="1">
    <location>
        <position position="200"/>
    </location>
    <ligand>
        <name>ATP</name>
        <dbReference type="ChEBI" id="CHEBI:30616"/>
    </ligand>
</feature>
<accession>B5Y0N3</accession>
<comment type="function">
    <text evidence="1">Catalyzes the reversible transfer of the terminal phosphate group between ATP and AMP. Plays an important role in cellular energy homeostasis and in adenine nucleotide metabolism.</text>
</comment>
<comment type="catalytic activity">
    <reaction evidence="1">
        <text>AMP + ATP = 2 ADP</text>
        <dbReference type="Rhea" id="RHEA:12973"/>
        <dbReference type="ChEBI" id="CHEBI:30616"/>
        <dbReference type="ChEBI" id="CHEBI:456215"/>
        <dbReference type="ChEBI" id="CHEBI:456216"/>
        <dbReference type="EC" id="2.7.4.3"/>
    </reaction>
</comment>
<comment type="pathway">
    <text evidence="1">Purine metabolism; AMP biosynthesis via salvage pathway; AMP from ADP: step 1/1.</text>
</comment>
<comment type="subunit">
    <text evidence="1">Monomer.</text>
</comment>
<comment type="subcellular location">
    <subcellularLocation>
        <location evidence="1">Cytoplasm</location>
    </subcellularLocation>
</comment>
<comment type="domain">
    <text evidence="1">Consists of three domains, a large central CORE domain and two small peripheral domains, NMPbind and LID, which undergo movements during catalysis. The LID domain closes over the site of phosphoryl transfer upon ATP binding. Assembling and dissambling the active center during each catalytic cycle provides an effective means to prevent ATP hydrolysis.</text>
</comment>
<comment type="similarity">
    <text evidence="1">Belongs to the adenylate kinase family.</text>
</comment>
<protein>
    <recommendedName>
        <fullName evidence="1">Adenylate kinase</fullName>
        <shortName evidence="1">AK</shortName>
        <ecNumber evidence="1">2.7.4.3</ecNumber>
    </recommendedName>
    <alternativeName>
        <fullName evidence="1">ATP-AMP transphosphorylase</fullName>
    </alternativeName>
    <alternativeName>
        <fullName evidence="1">ATP:AMP phosphotransferase</fullName>
    </alternativeName>
    <alternativeName>
        <fullName evidence="1">Adenylate monophosphate kinase</fullName>
    </alternativeName>
</protein>
<proteinExistence type="inferred from homology"/>
<gene>
    <name evidence="1" type="primary">adk</name>
    <name type="ordered locus">KPK_4224</name>
</gene>